<name>UGGG1_MOUSE</name>
<feature type="signal peptide" evidence="1">
    <location>
        <begin position="1"/>
        <end position="42"/>
    </location>
</feature>
<feature type="chain" id="PRO_0000012272" description="UDP-glucose:glycoprotein glucosyltransferase 1">
    <location>
        <begin position="43"/>
        <end position="1551"/>
    </location>
</feature>
<feature type="region of interest" description="Glucosyltransferase" evidence="1">
    <location>
        <begin position="1244"/>
        <end position="1551"/>
    </location>
</feature>
<feature type="region of interest" description="Disordered" evidence="6">
    <location>
        <begin position="1531"/>
        <end position="1551"/>
    </location>
</feature>
<feature type="short sequence motif" description="Prevents secretion from ER" evidence="5">
    <location>
        <begin position="1548"/>
        <end position="1551"/>
    </location>
</feature>
<feature type="modified residue" description="Phosphoserine" evidence="3">
    <location>
        <position position="1277"/>
    </location>
</feature>
<feature type="glycosylation site" description="N-linked (GlcNAc...) asparagine" evidence="4">
    <location>
        <position position="269"/>
    </location>
</feature>
<feature type="glycosylation site" description="N-linked (GlcNAc...) asparagine" evidence="4">
    <location>
        <position position="536"/>
    </location>
</feature>
<feature type="glycosylation site" description="N-linked (GlcNAc...) asparagine" evidence="4">
    <location>
        <position position="1228"/>
    </location>
</feature>
<feature type="sequence conflict" description="In Ref. 1; AAH68283." evidence="8" ref="1">
    <original>K</original>
    <variation>E</variation>
    <location>
        <position position="319"/>
    </location>
</feature>
<feature type="sequence conflict" description="In Ref. 1; AAH68283." evidence="8" ref="1">
    <original>S</original>
    <variation>F</variation>
    <location>
        <position position="445"/>
    </location>
</feature>
<feature type="sequence conflict" description="In Ref. 1; AAH68283." evidence="8" ref="1">
    <original>S</original>
    <variation>N</variation>
    <location>
        <position position="824"/>
    </location>
</feature>
<feature type="sequence conflict" description="In Ref. 1; AAH68283." evidence="8" ref="1">
    <original>Q</original>
    <variation>R</variation>
    <location>
        <position position="935"/>
    </location>
</feature>
<feature type="sequence conflict" description="In Ref. 1; AAH68283." evidence="8" ref="1">
    <original>N</original>
    <variation>T</variation>
    <location>
        <position position="1015"/>
    </location>
</feature>
<feature type="sequence conflict" description="In Ref. 1; AAH68283." evidence="8" ref="1">
    <original>I</original>
    <variation>T</variation>
    <location>
        <position position="1058"/>
    </location>
</feature>
<feature type="sequence conflict" description="In Ref. 2; AAH62936." evidence="8" ref="2">
    <original>E</original>
    <variation>Q</variation>
    <location>
        <position position="1083"/>
    </location>
</feature>
<feature type="sequence conflict" description="In Ref. 1; AAH68283." evidence="8" ref="1">
    <original>K</original>
    <variation>R</variation>
    <location>
        <position position="1212"/>
    </location>
</feature>
<gene>
    <name type="primary">Uggt1</name>
    <name type="synonym">Gt</name>
    <name type="synonym">Ugcgl1</name>
    <name type="synonym">Uggt</name>
    <name type="synonym">Ugt1</name>
    <name type="synonym">Ugtr</name>
</gene>
<keyword id="KW-0256">Endoplasmic reticulum</keyword>
<keyword id="KW-0325">Glycoprotein</keyword>
<keyword id="KW-0328">Glycosyltransferase</keyword>
<keyword id="KW-0597">Phosphoprotein</keyword>
<keyword id="KW-1185">Reference proteome</keyword>
<keyword id="KW-0732">Signal</keyword>
<keyword id="KW-0808">Transferase</keyword>
<dbReference type="EC" id="2.4.1.-" evidence="3"/>
<dbReference type="EMBL" id="AC133102">
    <property type="status" value="NOT_ANNOTATED_CDS"/>
    <property type="molecule type" value="Genomic_DNA"/>
</dbReference>
<dbReference type="EMBL" id="BC062936">
    <property type="protein sequence ID" value="AAH62936.1"/>
    <property type="molecule type" value="mRNA"/>
</dbReference>
<dbReference type="EMBL" id="BC068283">
    <property type="protein sequence ID" value="AAH68283.1"/>
    <property type="molecule type" value="mRNA"/>
</dbReference>
<dbReference type="CCDS" id="CCDS48238.1"/>
<dbReference type="RefSeq" id="NP_942602.2">
    <property type="nucleotide sequence ID" value="NM_198899.2"/>
</dbReference>
<dbReference type="SMR" id="Q6P5E4"/>
<dbReference type="BioGRID" id="235693">
    <property type="interactions" value="43"/>
</dbReference>
<dbReference type="CORUM" id="Q6P5E4"/>
<dbReference type="FunCoup" id="Q6P5E4">
    <property type="interactions" value="3122"/>
</dbReference>
<dbReference type="STRING" id="10090.ENSMUSP00000037930"/>
<dbReference type="CAZy" id="GT24">
    <property type="family name" value="Glycosyltransferase Family 24"/>
</dbReference>
<dbReference type="GlyConnect" id="2809">
    <property type="glycosylation" value="1 N-Linked glycan (1 site)"/>
</dbReference>
<dbReference type="GlyCosmos" id="Q6P5E4">
    <property type="glycosylation" value="3 sites, 1 glycan"/>
</dbReference>
<dbReference type="GlyGen" id="Q6P5E4">
    <property type="glycosylation" value="5 sites, 2 N-linked glycans (2 sites), 1 O-linked glycan (2 sites)"/>
</dbReference>
<dbReference type="iPTMnet" id="Q6P5E4"/>
<dbReference type="PhosphoSitePlus" id="Q6P5E4"/>
<dbReference type="SwissPalm" id="Q6P5E4"/>
<dbReference type="jPOST" id="Q6P5E4"/>
<dbReference type="PaxDb" id="10090-ENSMUSP00000037930"/>
<dbReference type="PeptideAtlas" id="Q6P5E4"/>
<dbReference type="ProteomicsDB" id="275380"/>
<dbReference type="Pumba" id="Q6P5E4"/>
<dbReference type="Antibodypedia" id="2454">
    <property type="antibodies" value="147 antibodies from 27 providers"/>
</dbReference>
<dbReference type="DNASU" id="320011"/>
<dbReference type="Ensembl" id="ENSMUST00000046875.14">
    <property type="protein sequence ID" value="ENSMUSP00000037930.8"/>
    <property type="gene ID" value="ENSMUSG00000037470.15"/>
</dbReference>
<dbReference type="GeneID" id="320011"/>
<dbReference type="KEGG" id="mmu:320011"/>
<dbReference type="UCSC" id="uc007app.2">
    <property type="organism name" value="mouse"/>
</dbReference>
<dbReference type="AGR" id="MGI:2443162"/>
<dbReference type="CTD" id="56886"/>
<dbReference type="MGI" id="MGI:2443162">
    <property type="gene designation" value="Uggt1"/>
</dbReference>
<dbReference type="VEuPathDB" id="HostDB:ENSMUSG00000037470"/>
<dbReference type="eggNOG" id="KOG1879">
    <property type="taxonomic scope" value="Eukaryota"/>
</dbReference>
<dbReference type="GeneTree" id="ENSGT00390000004600"/>
<dbReference type="HOGENOM" id="CLU_002668_1_1_1"/>
<dbReference type="InParanoid" id="Q6P5E4"/>
<dbReference type="OMA" id="RQTKTRF"/>
<dbReference type="OrthoDB" id="27683at2759"/>
<dbReference type="PhylomeDB" id="Q6P5E4"/>
<dbReference type="TreeFam" id="TF300320"/>
<dbReference type="UniPathway" id="UPA00378"/>
<dbReference type="BioGRID-ORCS" id="320011">
    <property type="hits" value="4 hits in 79 CRISPR screens"/>
</dbReference>
<dbReference type="ChiTaRS" id="Uggt1">
    <property type="organism name" value="mouse"/>
</dbReference>
<dbReference type="PRO" id="PR:Q6P5E4"/>
<dbReference type="Proteomes" id="UP000000589">
    <property type="component" value="Chromosome 1"/>
</dbReference>
<dbReference type="RNAct" id="Q6P5E4">
    <property type="molecule type" value="protein"/>
</dbReference>
<dbReference type="Bgee" id="ENSMUSG00000037470">
    <property type="expression patterns" value="Expressed in rostral migratory stream and 226 other cell types or tissues"/>
</dbReference>
<dbReference type="ExpressionAtlas" id="Q6P5E4">
    <property type="expression patterns" value="baseline and differential"/>
</dbReference>
<dbReference type="GO" id="GO:0005788">
    <property type="term" value="C:endoplasmic reticulum lumen"/>
    <property type="evidence" value="ECO:0000250"/>
    <property type="project" value="UniProtKB"/>
</dbReference>
<dbReference type="GO" id="GO:0005793">
    <property type="term" value="C:endoplasmic reticulum-Golgi intermediate compartment"/>
    <property type="evidence" value="ECO:0000250"/>
    <property type="project" value="UniProtKB"/>
</dbReference>
<dbReference type="GO" id="GO:0032991">
    <property type="term" value="C:protein-containing complex"/>
    <property type="evidence" value="ECO:0007669"/>
    <property type="project" value="Ensembl"/>
</dbReference>
<dbReference type="GO" id="GO:0003980">
    <property type="term" value="F:UDP-glucose:glycoprotein glucosyltransferase activity"/>
    <property type="evidence" value="ECO:0000250"/>
    <property type="project" value="UniProtKB"/>
</dbReference>
<dbReference type="GO" id="GO:0051082">
    <property type="term" value="F:unfolded protein binding"/>
    <property type="evidence" value="ECO:0000250"/>
    <property type="project" value="UniProtKB"/>
</dbReference>
<dbReference type="GO" id="GO:0006486">
    <property type="term" value="P:protein glycosylation"/>
    <property type="evidence" value="ECO:0007669"/>
    <property type="project" value="UniProtKB-UniPathway"/>
</dbReference>
<dbReference type="CDD" id="cd06432">
    <property type="entry name" value="GT8_HUGT1_C_like"/>
    <property type="match status" value="1"/>
</dbReference>
<dbReference type="FunFam" id="3.90.550.10:FF:000004">
    <property type="entry name" value="UDP-glucose glycoprotein glucosyltransferase 1"/>
    <property type="match status" value="1"/>
</dbReference>
<dbReference type="Gene3D" id="3.90.550.10">
    <property type="entry name" value="Spore Coat Polysaccharide Biosynthesis Protein SpsA, Chain A"/>
    <property type="match status" value="1"/>
</dbReference>
<dbReference type="InterPro" id="IPR040497">
    <property type="entry name" value="Glyco_transf_24"/>
</dbReference>
<dbReference type="InterPro" id="IPR029044">
    <property type="entry name" value="Nucleotide-diphossugar_trans"/>
</dbReference>
<dbReference type="InterPro" id="IPR009448">
    <property type="entry name" value="UDP-g_GGtrans"/>
</dbReference>
<dbReference type="InterPro" id="IPR040693">
    <property type="entry name" value="UGGT_TRXL_1"/>
</dbReference>
<dbReference type="InterPro" id="IPR040694">
    <property type="entry name" value="UGGT_TRXL_2"/>
</dbReference>
<dbReference type="InterPro" id="IPR040692">
    <property type="entry name" value="UGGT_TRXL_3"/>
</dbReference>
<dbReference type="InterPro" id="IPR040525">
    <property type="entry name" value="UGGT_TRXL_4"/>
</dbReference>
<dbReference type="PANTHER" id="PTHR11226">
    <property type="entry name" value="UDP-GLUCOSE GLYCOPROTEIN:GLUCOSYLTRANSFERASE"/>
    <property type="match status" value="1"/>
</dbReference>
<dbReference type="PANTHER" id="PTHR11226:SF3">
    <property type="entry name" value="UDP-GLUCOSE:GLYCOPROTEIN GLUCOSYLTRANSFERASE 1"/>
    <property type="match status" value="1"/>
</dbReference>
<dbReference type="Pfam" id="PF18404">
    <property type="entry name" value="Glyco_transf_24"/>
    <property type="match status" value="1"/>
</dbReference>
<dbReference type="Pfam" id="PF18400">
    <property type="entry name" value="Thioredoxin_12"/>
    <property type="match status" value="1"/>
</dbReference>
<dbReference type="Pfam" id="PF18401">
    <property type="entry name" value="Thioredoxin_13"/>
    <property type="match status" value="1"/>
</dbReference>
<dbReference type="Pfam" id="PF18402">
    <property type="entry name" value="Thioredoxin_14"/>
    <property type="match status" value="1"/>
</dbReference>
<dbReference type="Pfam" id="PF18403">
    <property type="entry name" value="Thioredoxin_15"/>
    <property type="match status" value="1"/>
</dbReference>
<dbReference type="Pfam" id="PF06427">
    <property type="entry name" value="UDP-g_GGTase"/>
    <property type="match status" value="1"/>
</dbReference>
<dbReference type="SUPFAM" id="SSF53448">
    <property type="entry name" value="Nucleotide-diphospho-sugar transferases"/>
    <property type="match status" value="1"/>
</dbReference>
<dbReference type="PROSITE" id="PS00014">
    <property type="entry name" value="ER_TARGET"/>
    <property type="match status" value="1"/>
</dbReference>
<protein>
    <recommendedName>
        <fullName>UDP-glucose:glycoprotein glucosyltransferase 1</fullName>
        <shortName>UGT1</shortName>
        <ecNumber evidence="3">2.4.1.-</ecNumber>
    </recommendedName>
    <alternativeName>
        <fullName>UDP--Glc:glycoprotein glucosyltransferase</fullName>
    </alternativeName>
    <alternativeName>
        <fullName>UDP-glucose ceramide glucosyltransferase-like 1</fullName>
    </alternativeName>
</protein>
<reference key="1">
    <citation type="journal article" date="2009" name="PLoS Biol.">
        <title>Lineage-specific biology revealed by a finished genome assembly of the mouse.</title>
        <authorList>
            <person name="Church D.M."/>
            <person name="Goodstadt L."/>
            <person name="Hillier L.W."/>
            <person name="Zody M.C."/>
            <person name="Goldstein S."/>
            <person name="She X."/>
            <person name="Bult C.J."/>
            <person name="Agarwala R."/>
            <person name="Cherry J.L."/>
            <person name="DiCuccio M."/>
            <person name="Hlavina W."/>
            <person name="Kapustin Y."/>
            <person name="Meric P."/>
            <person name="Maglott D."/>
            <person name="Birtle Z."/>
            <person name="Marques A.C."/>
            <person name="Graves T."/>
            <person name="Zhou S."/>
            <person name="Teague B."/>
            <person name="Potamousis K."/>
            <person name="Churas C."/>
            <person name="Place M."/>
            <person name="Herschleb J."/>
            <person name="Runnheim R."/>
            <person name="Forrest D."/>
            <person name="Amos-Landgraf J."/>
            <person name="Schwartz D.C."/>
            <person name="Cheng Z."/>
            <person name="Lindblad-Toh K."/>
            <person name="Eichler E.E."/>
            <person name="Ponting C.P."/>
        </authorList>
    </citation>
    <scope>NUCLEOTIDE SEQUENCE [LARGE SCALE GENOMIC DNA]</scope>
    <source>
        <strain>C57BL/6J</strain>
    </source>
</reference>
<reference evidence="9" key="2">
    <citation type="journal article" date="2004" name="Genome Res.">
        <title>The status, quality, and expansion of the NIH full-length cDNA project: the Mammalian Gene Collection (MGC).</title>
        <authorList>
            <consortium name="The MGC Project Team"/>
        </authorList>
    </citation>
    <scope>NUCLEOTIDE SEQUENCE [LARGE SCALE MRNA]</scope>
    <source>
        <strain evidence="9">C57BL/6J</strain>
        <strain evidence="10">ICR</strain>
        <tissue evidence="9">Brain</tissue>
        <tissue>Trophoblast stem cell</tissue>
    </source>
</reference>
<reference evidence="8" key="3">
    <citation type="journal article" date="2001" name="J. Biol. Chem.">
        <title>Association between the 15-kDa selenoprotein and UDP-glucose:glycoprotein glucosyltransferase in the endoplasmic reticulum of mammalian cells.</title>
        <authorList>
            <person name="Korotkov K.V."/>
            <person name="Kumaraswamy E."/>
            <person name="Zhou Y."/>
            <person name="Hatfield D.L."/>
            <person name="Gladyshev V.N."/>
        </authorList>
    </citation>
    <scope>INTERACTION WITH SELENOF</scope>
</reference>
<reference key="4">
    <citation type="journal article" date="2010" name="Cell">
        <title>A tissue-specific atlas of mouse protein phosphorylation and expression.</title>
        <authorList>
            <person name="Huttlin E.L."/>
            <person name="Jedrychowski M.P."/>
            <person name="Elias J.E."/>
            <person name="Goswami T."/>
            <person name="Rad R."/>
            <person name="Beausoleil S.A."/>
            <person name="Villen J."/>
            <person name="Haas W."/>
            <person name="Sowa M.E."/>
            <person name="Gygi S.P."/>
        </authorList>
    </citation>
    <scope>IDENTIFICATION BY MASS SPECTROMETRY [LARGE SCALE ANALYSIS]</scope>
    <source>
        <tissue>Brain</tissue>
        <tissue>Brown adipose tissue</tissue>
        <tissue>Heart</tissue>
        <tissue>Kidney</tissue>
        <tissue>Liver</tissue>
        <tissue>Lung</tissue>
        <tissue>Pancreas</tissue>
        <tissue>Spleen</tissue>
        <tissue>Testis</tissue>
    </source>
</reference>
<proteinExistence type="evidence at protein level"/>
<sequence>MCSRGDANTADAAAARRVTGLRYNMRLLIALALPCLFSLAEANSKAITTSLTTKWFSAPLLLEASEFLAEDSQEKFWSFVEATQNIGSSDHHDTDHSYYDAVLEAAFRFLSPLQQNLLKFCLSLRSYSASIQAFQQIAVDEPPPEGCKSFLSVHGKQTCDLDTLESLLLTAADRPKPLLFKGDHRYPSSNPESPVVILYSEIGHEEFSNIHHQLISKSNEGKINYVFRHYISNPSKEPVYLSGYGVELAIKSTEYKAKDDTQVKGTEVNATVIGESDPIDEVQGFLFGKLRELYPALEGQLKEFRKHLVESTNEMAPLKVWQLQDLSFQTAARILAASGALSLVVMKDISQNFPTKARAITKTAVSAQLRAEVEENQKYFKGTIGLQPGDSALFINGLHIDLDTQDIFSLFDTLRNEARVMEGLHRLGIEGLSLHNILKLNIQPSETDYAVDIRSPAISWVNNLEVDSRYNSWPSSLQELLRPTFPGVIRQIRKNLHNMVFIIDPVHETTAELISIAEMFLSNHIPLRIGFIFVVNDSEDVDGMQDAGVAVLRAYNYVAQEVDGYHAFQTLTQIYNKVRTGETVKVEHVVSVLEKKYPYVEVNSILGIDSAYDQNRKEARGYYEQTGVGPLPVVLFNGMPFEKEQLDPDELETITMHKILETTTFFQRAVYLGELSHDQDVVEYIMNQPNVVPRINSRILTAKREYLDLTASNNFYVDDFARFSALDSRGKTAAIANSMNYLTKKGMSSKEIYDDSFIRPVTFWIVGDFDSPSGRQLLYDAIKHQKTSNNVRISMINNPSQEISDSSTPIFRAIWAALQTQASSSAKNFITKMAKEETAEALAAGVDIAEFSVGGMDVSLFKEVFESSRMDFILSHALYCRDVLKLKKGQRVVISNGRIIGPLEDNELFNQDDFHLLENIILKTSGQKIKSHIQQLRVEEDVASDLVMKVDALLSAQPKGEARIEYQFFEDKHSAIKLKPKEGETYYDVVAVVDPVTREAQRLAPLLLVLTQLINMNLRVFMNCQSKLSDMPLKSFYRYVLEPEISFTADSSFAKGPIAKFLDMPQSPLFTLNLNTPESWMVESVRTPYDLDNIYLEEVDSIVAAEYELEYLLLEGHCYDITTGQPPRGLQFTLGTSANPTIVDTIVMANLGYFQLKANPGAWILRLRKGRSDDIYRIYSHDGTDSPPDANDVVVILNNFKSKIIKVKVQKKADMANEDLLSDGTNENESGFWDSFKWGFSGQKAEEVKQDKDDIINIFSVASGHLYERFLRIMMLSVLKNTKTPVKFWFLKNYLSPTFKEFIPYMAKKYNFQYELVQYKWPRWLHQQTEKQRIIWGYKILFLDVLFPLVVDKFLFVDADQIVRTDLKELRDFNLDGAPYGYTPFCDSRREMDGYRFWKSGYWASHLAGRKYHISALYVVDLKKFRKIAAGDRLRGQYQGLSQDPNSLSNLDQDLPNNMIHQVPIKSLPQEWLWCETWCDDASKKRAKTIDLCNNPMTKEPKLEAAVRIVPEWQDYDQEIKQLQTLFQEEKELGTLHTEETQEGSQKHEEL</sequence>
<organism>
    <name type="scientific">Mus musculus</name>
    <name type="common">Mouse</name>
    <dbReference type="NCBI Taxonomy" id="10090"/>
    <lineage>
        <taxon>Eukaryota</taxon>
        <taxon>Metazoa</taxon>
        <taxon>Chordata</taxon>
        <taxon>Craniata</taxon>
        <taxon>Vertebrata</taxon>
        <taxon>Euteleostomi</taxon>
        <taxon>Mammalia</taxon>
        <taxon>Eutheria</taxon>
        <taxon>Euarchontoglires</taxon>
        <taxon>Glires</taxon>
        <taxon>Rodentia</taxon>
        <taxon>Myomorpha</taxon>
        <taxon>Muroidea</taxon>
        <taxon>Muridae</taxon>
        <taxon>Murinae</taxon>
        <taxon>Mus</taxon>
        <taxon>Mus</taxon>
    </lineage>
</organism>
<comment type="function">
    <text evidence="1">Recognizes glycoproteins with minor folding defects. Reglucosylates single N-glycans near the misfolded part of the protein, thus providing quality control for protein folding in the endoplasmic reticulum. Reglucosylated proteins are recognized by calreticulin for recycling to the endoplasmic reticulum and refolding or degradation (By similarity).</text>
</comment>
<comment type="catalytic activity">
    <reaction evidence="3">
        <text>N(4)-(alpha-D-Man-(1-&gt;2)-alpha-D-Man-(1-&gt;2)-alpha-D-Man-(1-&gt;3)-[alpha-D-Man-(1-&gt;2)-alpha-D-Man-(1-&gt;3)-[alpha-D-Man-(1-&gt;2)-alpha-D-Man-(1-&gt;6)]-alpha-D-Man-(1-&gt;6)]-beta-D-Man-(1-&gt;4)-beta-D-GlcNAc-(1-&gt;4)-beta-D-GlcNAc)-L-asparaginyl-[protein] (N-glucan mannose isomer 9A1,2,3B1,2,3) + UDP-alpha-D-glucose = N(4)-(alpha-D-Glc-(1-&gt;3)-alpha-D-Man-(1-&gt;2)-alpha-D-Man-(1-&gt;2)-alpha-D-Man-(1-&gt;3)-[alpha-D-Man-(1-&gt;2)-alpha-D-Man-(1-&gt;3)-[alpha-D-Man-(1-&gt;2)-alpha-D-Man-(1-&gt;6)]-alpha-D-Man-(1-&gt;6)]-beta-D-Man-(1-&gt;4)-beta-D-GlcNAc-(1-&gt;4)-beta-D-GlcNAc)-L-asparaginyl-[protein] + UDP + H(+)</text>
        <dbReference type="Rhea" id="RHEA:61304"/>
        <dbReference type="Rhea" id="RHEA-COMP:14356"/>
        <dbReference type="Rhea" id="RHEA-COMP:14357"/>
        <dbReference type="ChEBI" id="CHEBI:15378"/>
        <dbReference type="ChEBI" id="CHEBI:58223"/>
        <dbReference type="ChEBI" id="CHEBI:58885"/>
        <dbReference type="ChEBI" id="CHEBI:59080"/>
        <dbReference type="ChEBI" id="CHEBI:139493"/>
    </reaction>
</comment>
<comment type="cofactor">
    <cofactor evidence="3">
        <name>Ca(2+)</name>
        <dbReference type="ChEBI" id="CHEBI:29108"/>
    </cofactor>
    <cofactor evidence="3">
        <name>Mn(2+)</name>
        <dbReference type="ChEBI" id="CHEBI:29035"/>
    </cofactor>
</comment>
<comment type="pathway">
    <text evidence="3">Protein modification; protein glycosylation.</text>
</comment>
<comment type="subunit">
    <text evidence="2 3 7">Monomer as well as in a tight complex with SELENOF (PubMed:11278576). Interacts with METTL23 (By similarity). Part of a large chaperone multiprotein complex comprising DNAJB11, HSP90B1, HSPA5, HYOU, PDIA2, PDIA4, PDIA6, PPIB, SDF2L1, UGGT1 and very small amounts of ERP29, but not, or at very low levels, CALR nor CANX (By similarity).</text>
</comment>
<comment type="subcellular location">
    <subcellularLocation>
        <location evidence="3 5">Endoplasmic reticulum lumen</location>
    </subcellularLocation>
    <subcellularLocation>
        <location evidence="5">Endoplasmic reticulum-Golgi intermediate compartment</location>
    </subcellularLocation>
</comment>
<comment type="domain">
    <text evidence="1">The N-terminal non-catalytic domain is assumed to mediate recognition of proteins with partial folding defects.</text>
</comment>
<comment type="similarity">
    <text evidence="2">Belongs to the glycosyltransferase 8 family.</text>
</comment>
<accession>Q6P5E4</accession>
<accession>E9QQ49</accession>
<accession>Q6NV70</accession>
<evidence type="ECO:0000250" key="1"/>
<evidence type="ECO:0000250" key="2">
    <source>
        <dbReference type="UniProtKB" id="Q9JLA3"/>
    </source>
</evidence>
<evidence type="ECO:0000250" key="3">
    <source>
        <dbReference type="UniProtKB" id="Q9NYU2"/>
    </source>
</evidence>
<evidence type="ECO:0000255" key="4"/>
<evidence type="ECO:0000255" key="5">
    <source>
        <dbReference type="PROSITE-ProRule" id="PRU10138"/>
    </source>
</evidence>
<evidence type="ECO:0000256" key="6">
    <source>
        <dbReference type="SAM" id="MobiDB-lite"/>
    </source>
</evidence>
<evidence type="ECO:0000269" key="7">
    <source>
    </source>
</evidence>
<evidence type="ECO:0000305" key="8"/>
<evidence type="ECO:0000312" key="9">
    <source>
        <dbReference type="EMBL" id="AAH62936.1"/>
    </source>
</evidence>
<evidence type="ECO:0000312" key="10">
    <source>
        <dbReference type="EMBL" id="AAH68283.1"/>
    </source>
</evidence>